<keyword id="KW-0064">Aspartyl protease</keyword>
<keyword id="KW-0378">Hydrolase</keyword>
<keyword id="KW-0479">Metal-binding</keyword>
<keyword id="KW-0533">Nickel</keyword>
<keyword id="KW-0645">Protease</keyword>
<keyword id="KW-1185">Reference proteome</keyword>
<organism>
    <name type="scientific">Bradyrhizobium diazoefficiens (strain JCM 10833 / BCRC 13528 / IAM 13628 / NBRC 14792 / USDA 110)</name>
    <dbReference type="NCBI Taxonomy" id="224911"/>
    <lineage>
        <taxon>Bacteria</taxon>
        <taxon>Pseudomonadati</taxon>
        <taxon>Pseudomonadota</taxon>
        <taxon>Alphaproteobacteria</taxon>
        <taxon>Hyphomicrobiales</taxon>
        <taxon>Nitrobacteraceae</taxon>
        <taxon>Bradyrhizobium</taxon>
    </lineage>
</organism>
<feature type="chain" id="PRO_0000201938" description="Hydrogenase expression/formation protein HupD">
    <location>
        <begin position="1"/>
        <end position="192"/>
    </location>
</feature>
<feature type="binding site" evidence="1">
    <location>
        <position position="23"/>
    </location>
    <ligand>
        <name>Ni(2+)</name>
        <dbReference type="ChEBI" id="CHEBI:49786"/>
    </ligand>
</feature>
<feature type="binding site" evidence="1">
    <location>
        <position position="69"/>
    </location>
    <ligand>
        <name>Ni(2+)</name>
        <dbReference type="ChEBI" id="CHEBI:49786"/>
    </ligand>
</feature>
<feature type="binding site" evidence="1">
    <location>
        <position position="100"/>
    </location>
    <ligand>
        <name>Ni(2+)</name>
        <dbReference type="ChEBI" id="CHEBI:49786"/>
    </ligand>
</feature>
<feature type="sequence conflict" description="In Ref. 1; CAA79944." evidence="2" ref="1">
    <original>S</original>
    <variation>A</variation>
    <location>
        <position position="149"/>
    </location>
</feature>
<feature type="sequence conflict" description="In Ref. 1; CAA79944." evidence="2" ref="1">
    <original>LAESE</original>
    <variation>IWRSPS</variation>
    <location>
        <begin position="171"/>
        <end position="175"/>
    </location>
</feature>
<comment type="function">
    <text>Not known. Could be involved in the processing of hydrogenase.</text>
</comment>
<comment type="similarity">
    <text evidence="2">Belongs to the peptidase A31 family.</text>
</comment>
<accession>Q45251</accession>
<accession>Q45249</accession>
<gene>
    <name type="primary">hupD</name>
    <name type="ordered locus">bll6939</name>
</gene>
<reference key="1">
    <citation type="journal article" date="1993" name="J. Mol. Biol.">
        <title>Nucleotide sequence analysis of four genes, hupC, hupD, hupF and hupG, downstream of the hydrogenase structural genes in Bradyrhizobium japonicum.</title>
        <authorList>
            <person name="van Soom C."/>
            <person name="Browaeys J."/>
            <person name="Verreth C."/>
            <person name="Vanderleyden J."/>
        </authorList>
    </citation>
    <scope>NUCLEOTIDE SEQUENCE [GENOMIC DNA]</scope>
</reference>
<reference key="2">
    <citation type="journal article" date="1994" name="Gene">
        <title>Sequence and characterization of three genes within the hydrogenase gene cluster of Bradyrhizobium japonicum.</title>
        <authorList>
            <person name="Fu C."/>
            <person name="Maier R.J."/>
        </authorList>
    </citation>
    <scope>NUCLEOTIDE SEQUENCE [GENOMIC DNA]</scope>
    <source>
        <strain>JCM 10833 / BCRC 13528 / IAM 13628 / NBRC 14792 / USDA 110</strain>
    </source>
</reference>
<reference key="3">
    <citation type="journal article" date="2002" name="DNA Res.">
        <title>Complete genomic sequence of nitrogen-fixing symbiotic bacterium Bradyrhizobium japonicum USDA110.</title>
        <authorList>
            <person name="Kaneko T."/>
            <person name="Nakamura Y."/>
            <person name="Sato S."/>
            <person name="Minamisawa K."/>
            <person name="Uchiumi T."/>
            <person name="Sasamoto S."/>
            <person name="Watanabe A."/>
            <person name="Idesawa K."/>
            <person name="Iriguchi M."/>
            <person name="Kawashima K."/>
            <person name="Kohara M."/>
            <person name="Matsumoto M."/>
            <person name="Shimpo S."/>
            <person name="Tsuruoka H."/>
            <person name="Wada T."/>
            <person name="Yamada M."/>
            <person name="Tabata S."/>
        </authorList>
    </citation>
    <scope>NUCLEOTIDE SEQUENCE [LARGE SCALE GENOMIC DNA]</scope>
    <source>
        <strain>JCM 10833 / BCRC 13528 / IAM 13628 / NBRC 14792 / USDA 110</strain>
    </source>
</reference>
<protein>
    <recommendedName>
        <fullName>Hydrogenase expression/formation protein HupD</fullName>
    </recommendedName>
</protein>
<evidence type="ECO:0000250" key="1"/>
<evidence type="ECO:0000305" key="2"/>
<proteinExistence type="inferred from homology"/>
<dbReference type="EMBL" id="Z21948">
    <property type="protein sequence ID" value="CAA79944.1"/>
    <property type="molecule type" value="Genomic_DNA"/>
</dbReference>
<dbReference type="EMBL" id="L24446">
    <property type="protein sequence ID" value="AAD13469.1"/>
    <property type="molecule type" value="Genomic_DNA"/>
</dbReference>
<dbReference type="EMBL" id="BA000040">
    <property type="protein sequence ID" value="BAC52204.1"/>
    <property type="molecule type" value="Genomic_DNA"/>
</dbReference>
<dbReference type="PIR" id="S39401">
    <property type="entry name" value="S39401"/>
</dbReference>
<dbReference type="RefSeq" id="NP_773579.1">
    <property type="nucleotide sequence ID" value="NC_004463.1"/>
</dbReference>
<dbReference type="RefSeq" id="WP_011089677.1">
    <property type="nucleotide sequence ID" value="NC_004463.1"/>
</dbReference>
<dbReference type="SMR" id="Q45251"/>
<dbReference type="FunCoup" id="Q45251">
    <property type="interactions" value="154"/>
</dbReference>
<dbReference type="STRING" id="224911.AAV28_32285"/>
<dbReference type="MEROPS" id="A31.002"/>
<dbReference type="EnsemblBacteria" id="BAC52204">
    <property type="protein sequence ID" value="BAC52204"/>
    <property type="gene ID" value="BAC52204"/>
</dbReference>
<dbReference type="GeneID" id="46493905"/>
<dbReference type="KEGG" id="bja:bll6939"/>
<dbReference type="PATRIC" id="fig|224911.44.peg.6973"/>
<dbReference type="eggNOG" id="COG0680">
    <property type="taxonomic scope" value="Bacteria"/>
</dbReference>
<dbReference type="HOGENOM" id="CLU_099037_0_1_5"/>
<dbReference type="InParanoid" id="Q45251"/>
<dbReference type="OrthoDB" id="9792731at2"/>
<dbReference type="PhylomeDB" id="Q45251"/>
<dbReference type="Proteomes" id="UP000002526">
    <property type="component" value="Chromosome"/>
</dbReference>
<dbReference type="GO" id="GO:0004190">
    <property type="term" value="F:aspartic-type endopeptidase activity"/>
    <property type="evidence" value="ECO:0007669"/>
    <property type="project" value="UniProtKB-KW"/>
</dbReference>
<dbReference type="GO" id="GO:0004175">
    <property type="term" value="F:endopeptidase activity"/>
    <property type="evidence" value="ECO:0000318"/>
    <property type="project" value="GO_Central"/>
</dbReference>
<dbReference type="GO" id="GO:0008047">
    <property type="term" value="F:enzyme activator activity"/>
    <property type="evidence" value="ECO:0007669"/>
    <property type="project" value="InterPro"/>
</dbReference>
<dbReference type="GO" id="GO:0046872">
    <property type="term" value="F:metal ion binding"/>
    <property type="evidence" value="ECO:0007669"/>
    <property type="project" value="UniProtKB-KW"/>
</dbReference>
<dbReference type="GO" id="GO:0016485">
    <property type="term" value="P:protein processing"/>
    <property type="evidence" value="ECO:0000318"/>
    <property type="project" value="GO_Central"/>
</dbReference>
<dbReference type="CDD" id="cd06062">
    <property type="entry name" value="H2MP_MemB-H2up"/>
    <property type="match status" value="1"/>
</dbReference>
<dbReference type="FunFam" id="3.40.50.1450:FF:000002">
    <property type="entry name" value="Hydrogenase 1 maturation protease"/>
    <property type="match status" value="1"/>
</dbReference>
<dbReference type="Gene3D" id="3.40.50.1450">
    <property type="entry name" value="HybD-like"/>
    <property type="match status" value="1"/>
</dbReference>
<dbReference type="InterPro" id="IPR004419">
    <property type="entry name" value="Pept_A31_hyd_express"/>
</dbReference>
<dbReference type="InterPro" id="IPR023430">
    <property type="entry name" value="Pept_HybD-like_dom_sf"/>
</dbReference>
<dbReference type="InterPro" id="IPR000671">
    <property type="entry name" value="Peptidase_A31"/>
</dbReference>
<dbReference type="NCBIfam" id="TIGR00140">
    <property type="entry name" value="hupD"/>
    <property type="match status" value="1"/>
</dbReference>
<dbReference type="NCBIfam" id="TIGR00072">
    <property type="entry name" value="hydrog_prot"/>
    <property type="match status" value="1"/>
</dbReference>
<dbReference type="PANTHER" id="PTHR30302">
    <property type="entry name" value="HYDROGENASE 1 MATURATION PROTEASE"/>
    <property type="match status" value="1"/>
</dbReference>
<dbReference type="PANTHER" id="PTHR30302:SF1">
    <property type="entry name" value="HYDROGENASE 2 MATURATION PROTEASE"/>
    <property type="match status" value="1"/>
</dbReference>
<dbReference type="Pfam" id="PF01750">
    <property type="entry name" value="HycI"/>
    <property type="match status" value="1"/>
</dbReference>
<dbReference type="PRINTS" id="PR00446">
    <property type="entry name" value="HYDRGNUPTAKE"/>
</dbReference>
<dbReference type="SUPFAM" id="SSF53163">
    <property type="entry name" value="HybD-like"/>
    <property type="match status" value="1"/>
</dbReference>
<sequence length="192" mass="21248">MPTSSQDNRILVLGIGNILWADEGFGVRAVEEFHRRYAVPDNVTILDGGTQGLYLVNYLEEADRLIVFDAIDYGLEPGRLKLVRDDEVPRFTGAKKMSLHQTGFQEVISAADLLGRCPKHLVLIGCQPLDLEDWGGPLTPPVRDQIAPSIDLACQVLAEWGVTVSRRSAPLAESERLLANDIDHANYEMRPA</sequence>
<name>HUPD_BRADU</name>